<feature type="chain" id="PRO_0000373252" description="Protein MGF 360-3L">
    <location>
        <begin position="1"/>
        <end position="356"/>
    </location>
</feature>
<feature type="repeat" description="ANK">
    <location>
        <begin position="61"/>
        <end position="93"/>
    </location>
</feature>
<name>3603L_ASFP4</name>
<protein>
    <recommendedName>
        <fullName>Protein MGF 360-3L</fullName>
    </recommendedName>
</protein>
<dbReference type="EMBL" id="AY261363">
    <property type="status" value="NOT_ANNOTATED_CDS"/>
    <property type="molecule type" value="Genomic_DNA"/>
</dbReference>
<dbReference type="SMR" id="P0C9M6"/>
<dbReference type="Proteomes" id="UP000000859">
    <property type="component" value="Segment"/>
</dbReference>
<dbReference type="GO" id="GO:0042330">
    <property type="term" value="P:taxis"/>
    <property type="evidence" value="ECO:0007669"/>
    <property type="project" value="InterPro"/>
</dbReference>
<dbReference type="InterPro" id="IPR002595">
    <property type="entry name" value="ASFV_MGF360"/>
</dbReference>
<dbReference type="Pfam" id="PF01671">
    <property type="entry name" value="ASFV_360"/>
    <property type="match status" value="1"/>
</dbReference>
<keyword id="KW-0040">ANK repeat</keyword>
<reference key="1">
    <citation type="submission" date="2003-03" db="EMBL/GenBank/DDBJ databases">
        <title>African swine fever virus genomes.</title>
        <authorList>
            <person name="Kutish G.F."/>
            <person name="Rock D.L."/>
        </authorList>
    </citation>
    <scope>NUCLEOTIDE SEQUENCE [LARGE SCALE GENOMIC DNA]</scope>
</reference>
<gene>
    <name type="ordered locus">Pret-007</name>
</gene>
<evidence type="ECO:0000250" key="1">
    <source>
        <dbReference type="UniProtKB" id="P23165"/>
    </source>
</evidence>
<evidence type="ECO:0000305" key="2"/>
<accession>P0C9M6</accession>
<organismHost>
    <name type="scientific">Ornithodoros</name>
    <name type="common">relapsing fever ticks</name>
    <dbReference type="NCBI Taxonomy" id="6937"/>
</organismHost>
<organismHost>
    <name type="scientific">Phacochoerus aethiopicus</name>
    <name type="common">Warthog</name>
    <dbReference type="NCBI Taxonomy" id="85517"/>
</organismHost>
<organismHost>
    <name type="scientific">Phacochoerus africanus</name>
    <name type="common">Warthog</name>
    <dbReference type="NCBI Taxonomy" id="41426"/>
</organismHost>
<organismHost>
    <name type="scientific">Potamochoerus larvatus</name>
    <name type="common">Bushpig</name>
    <dbReference type="NCBI Taxonomy" id="273792"/>
</organismHost>
<organismHost>
    <name type="scientific">Sus scrofa</name>
    <name type="common">Pig</name>
    <dbReference type="NCBI Taxonomy" id="9823"/>
</organismHost>
<comment type="function">
    <text evidence="1">Plays a role in virus cell tropism, and may be required for efficient virus replication in macrophages.</text>
</comment>
<comment type="similarity">
    <text evidence="2">Belongs to the asfivirus MGF 360 family.</text>
</comment>
<sequence>MQPSTLQTLTKKALATQHVSKDDYYILERCGLWWHEAPISMYIDDDNQIIIKTLCYKEGIKLNTALVLAVKENNDDLIMLFTEWGANINYGLLFINNEHTRNLCRKLGAKEELETSEILRFFFETKHKITSSNIILCHELFSNNPFLQNVNMVDLRTIIYWELKDLTTNSMLNEIPFSEMLTKYWYGIAVKYNLKEAIQYFCQEYRHFDEWRLICALSFNNVFDLHEICNTTKVHMSINKMMELACMRDNNFLTIYYCFALGANVNRAMLISVKNFRIENMFFCMDLGANVIEHSKTLADIYGYSIIVNILSLKIYKANPILLSKETNPEKINTLLKNYYSKNMLAYDICCIDNYL</sequence>
<organism>
    <name type="scientific">African swine fever virus (isolate Tick/South Africa/Pretoriuskop Pr4/1996)</name>
    <name type="common">ASFV</name>
    <dbReference type="NCBI Taxonomy" id="561443"/>
    <lineage>
        <taxon>Viruses</taxon>
        <taxon>Varidnaviria</taxon>
        <taxon>Bamfordvirae</taxon>
        <taxon>Nucleocytoviricota</taxon>
        <taxon>Pokkesviricetes</taxon>
        <taxon>Asfuvirales</taxon>
        <taxon>Asfarviridae</taxon>
        <taxon>Asfivirus</taxon>
        <taxon>African swine fever virus</taxon>
    </lineage>
</organism>
<proteinExistence type="inferred from homology"/>